<name>RS15_SYNSC</name>
<proteinExistence type="inferred from homology"/>
<sequence length="89" mass="10225">MSLDTTEKQQLINTHQTHGTDTGSAEVQVAMLSERINRLSRHLQNNIHDFSSRQGLLKMIGRRKRLLSYMRSKSEQRYADTIAKLGIRG</sequence>
<gene>
    <name evidence="1" type="primary">rpsO</name>
    <name evidence="1" type="synonym">rps15</name>
    <name type="ordered locus">Syncc9605_1160</name>
</gene>
<organism>
    <name type="scientific">Synechococcus sp. (strain CC9605)</name>
    <dbReference type="NCBI Taxonomy" id="110662"/>
    <lineage>
        <taxon>Bacteria</taxon>
        <taxon>Bacillati</taxon>
        <taxon>Cyanobacteriota</taxon>
        <taxon>Cyanophyceae</taxon>
        <taxon>Synechococcales</taxon>
        <taxon>Synechococcaceae</taxon>
        <taxon>Synechococcus</taxon>
    </lineage>
</organism>
<accession>Q3AKG7</accession>
<evidence type="ECO:0000255" key="1">
    <source>
        <dbReference type="HAMAP-Rule" id="MF_01343"/>
    </source>
</evidence>
<evidence type="ECO:0000256" key="2">
    <source>
        <dbReference type="SAM" id="MobiDB-lite"/>
    </source>
</evidence>
<evidence type="ECO:0000305" key="3"/>
<keyword id="KW-0687">Ribonucleoprotein</keyword>
<keyword id="KW-0689">Ribosomal protein</keyword>
<keyword id="KW-0694">RNA-binding</keyword>
<keyword id="KW-0699">rRNA-binding</keyword>
<dbReference type="EMBL" id="CP000110">
    <property type="protein sequence ID" value="ABB34915.1"/>
    <property type="molecule type" value="Genomic_DNA"/>
</dbReference>
<dbReference type="RefSeq" id="WP_011364136.1">
    <property type="nucleotide sequence ID" value="NC_007516.1"/>
</dbReference>
<dbReference type="SMR" id="Q3AKG7"/>
<dbReference type="STRING" id="110662.Syncc9605_1160"/>
<dbReference type="KEGG" id="syd:Syncc9605_1160"/>
<dbReference type="eggNOG" id="COG0184">
    <property type="taxonomic scope" value="Bacteria"/>
</dbReference>
<dbReference type="HOGENOM" id="CLU_148518_0_1_3"/>
<dbReference type="OrthoDB" id="9799262at2"/>
<dbReference type="GO" id="GO:0022627">
    <property type="term" value="C:cytosolic small ribosomal subunit"/>
    <property type="evidence" value="ECO:0007669"/>
    <property type="project" value="TreeGrafter"/>
</dbReference>
<dbReference type="GO" id="GO:0019843">
    <property type="term" value="F:rRNA binding"/>
    <property type="evidence" value="ECO:0007669"/>
    <property type="project" value="UniProtKB-UniRule"/>
</dbReference>
<dbReference type="GO" id="GO:0003735">
    <property type="term" value="F:structural constituent of ribosome"/>
    <property type="evidence" value="ECO:0007669"/>
    <property type="project" value="InterPro"/>
</dbReference>
<dbReference type="GO" id="GO:0006412">
    <property type="term" value="P:translation"/>
    <property type="evidence" value="ECO:0007669"/>
    <property type="project" value="UniProtKB-UniRule"/>
</dbReference>
<dbReference type="CDD" id="cd00353">
    <property type="entry name" value="Ribosomal_S15p_S13e"/>
    <property type="match status" value="1"/>
</dbReference>
<dbReference type="FunFam" id="1.10.287.10:FF:000002">
    <property type="entry name" value="30S ribosomal protein S15"/>
    <property type="match status" value="1"/>
</dbReference>
<dbReference type="Gene3D" id="6.10.250.3130">
    <property type="match status" value="1"/>
</dbReference>
<dbReference type="Gene3D" id="1.10.287.10">
    <property type="entry name" value="S15/NS1, RNA-binding"/>
    <property type="match status" value="1"/>
</dbReference>
<dbReference type="HAMAP" id="MF_01343_B">
    <property type="entry name" value="Ribosomal_uS15_B"/>
    <property type="match status" value="1"/>
</dbReference>
<dbReference type="InterPro" id="IPR000589">
    <property type="entry name" value="Ribosomal_uS15"/>
</dbReference>
<dbReference type="InterPro" id="IPR005290">
    <property type="entry name" value="Ribosomal_uS15_bac-type"/>
</dbReference>
<dbReference type="InterPro" id="IPR009068">
    <property type="entry name" value="uS15_NS1_RNA-bd_sf"/>
</dbReference>
<dbReference type="NCBIfam" id="TIGR00952">
    <property type="entry name" value="S15_bact"/>
    <property type="match status" value="1"/>
</dbReference>
<dbReference type="PANTHER" id="PTHR23321">
    <property type="entry name" value="RIBOSOMAL PROTEIN S15, BACTERIAL AND ORGANELLAR"/>
    <property type="match status" value="1"/>
</dbReference>
<dbReference type="PANTHER" id="PTHR23321:SF26">
    <property type="entry name" value="SMALL RIBOSOMAL SUBUNIT PROTEIN US15M"/>
    <property type="match status" value="1"/>
</dbReference>
<dbReference type="Pfam" id="PF00312">
    <property type="entry name" value="Ribosomal_S15"/>
    <property type="match status" value="1"/>
</dbReference>
<dbReference type="SMART" id="SM01387">
    <property type="entry name" value="Ribosomal_S15"/>
    <property type="match status" value="1"/>
</dbReference>
<dbReference type="SUPFAM" id="SSF47060">
    <property type="entry name" value="S15/NS1 RNA-binding domain"/>
    <property type="match status" value="1"/>
</dbReference>
<dbReference type="PROSITE" id="PS00362">
    <property type="entry name" value="RIBOSOMAL_S15"/>
    <property type="match status" value="1"/>
</dbReference>
<comment type="function">
    <text evidence="1">One of the primary rRNA binding proteins, it binds directly to 16S rRNA where it helps nucleate assembly of the platform of the 30S subunit by binding and bridging several RNA helices of the 16S rRNA.</text>
</comment>
<comment type="function">
    <text evidence="1">Forms an intersubunit bridge (bridge B4) with the 23S rRNA of the 50S subunit in the ribosome.</text>
</comment>
<comment type="subunit">
    <text evidence="1">Part of the 30S ribosomal subunit. Forms a bridge to the 50S subunit in the 70S ribosome, contacting the 23S rRNA.</text>
</comment>
<comment type="similarity">
    <text evidence="1">Belongs to the universal ribosomal protein uS15 family.</text>
</comment>
<reference key="1">
    <citation type="submission" date="2005-07" db="EMBL/GenBank/DDBJ databases">
        <title>Complete sequence of Synechococcus sp. CC9605.</title>
        <authorList>
            <consortium name="US DOE Joint Genome Institute"/>
            <person name="Copeland A."/>
            <person name="Lucas S."/>
            <person name="Lapidus A."/>
            <person name="Barry K."/>
            <person name="Detter J.C."/>
            <person name="Glavina T."/>
            <person name="Hammon N."/>
            <person name="Israni S."/>
            <person name="Pitluck S."/>
            <person name="Schmutz J."/>
            <person name="Martinez M."/>
            <person name="Larimer F."/>
            <person name="Land M."/>
            <person name="Kyrpides N."/>
            <person name="Ivanova N."/>
            <person name="Richardson P."/>
        </authorList>
    </citation>
    <scope>NUCLEOTIDE SEQUENCE [LARGE SCALE GENOMIC DNA]</scope>
    <source>
        <strain>CC9605</strain>
    </source>
</reference>
<protein>
    <recommendedName>
        <fullName evidence="1">Small ribosomal subunit protein uS15</fullName>
    </recommendedName>
    <alternativeName>
        <fullName evidence="3">30S ribosomal protein S15</fullName>
    </alternativeName>
</protein>
<feature type="chain" id="PRO_0000255540" description="Small ribosomal subunit protein uS15">
    <location>
        <begin position="1"/>
        <end position="89"/>
    </location>
</feature>
<feature type="region of interest" description="Disordered" evidence="2">
    <location>
        <begin position="1"/>
        <end position="25"/>
    </location>
</feature>
<feature type="compositionally biased region" description="Polar residues" evidence="2">
    <location>
        <begin position="8"/>
        <end position="25"/>
    </location>
</feature>